<accession>Q9H342</accession>
<comment type="function">
    <text evidence="4">Odorant receptor.</text>
</comment>
<comment type="subcellular location">
    <subcellularLocation>
        <location>Cell membrane</location>
        <topology>Multi-pass membrane protein</topology>
    </subcellularLocation>
</comment>
<comment type="polymorphism">
    <text>A nonsynonymous SNP at position Cys-100, a highly conserved amino-acid, in the gene coding for this protein is responsible for functional diversity.</text>
</comment>
<comment type="similarity">
    <text evidence="2">Belongs to the G-protein coupled receptor 1 family.</text>
</comment>
<comment type="online information" name="Human Olfactory Receptor Data Exploratorium (HORDE)">
    <link uri="http://genome.weizmann.ac.il/horde/card/index/symbol:OR51J1"/>
</comment>
<sequence length="316" mass="34838">MKISNNSLGFLPTTFILVGIPGLESEHLWISVPFSLIYIIIFLGNGIILHVIRTDIALHQPMYLFLAMLALAEVRVSASTLPTVLGIFLFGNTEISLEACLFPDVLHPFFIHDGASCAAGHVFGPLYSHLQPTELHSYPDTAQGLWHRSYYRTEKHYAHGSVAHSLMASALLWPQCPLTFLLSAPQSYLSCGNISVNNIYGIFIVTSTFGLDSLLIVISYGLILHTVLGIATGEGRKKALNTCGSHVCAVLAYYVPMIGLSIVHRLGHRVSPLLQAMMANAYLFFPPVVNPIVYSIKTKEIHGAIVRMLLEKRRRV</sequence>
<evidence type="ECO:0000255" key="1"/>
<evidence type="ECO:0000255" key="2">
    <source>
        <dbReference type="PROSITE-ProRule" id="PRU00521"/>
    </source>
</evidence>
<evidence type="ECO:0000269" key="3">
    <source>
    </source>
</evidence>
<evidence type="ECO:0000305" key="4"/>
<dbReference type="EMBL" id="AF137396">
    <property type="protein sequence ID" value="AAG41680.1"/>
    <property type="molecule type" value="Genomic_DNA"/>
</dbReference>
<dbReference type="EMBL" id="AC104389">
    <property type="status" value="NOT_ANNOTATED_CDS"/>
    <property type="molecule type" value="Genomic_DNA"/>
</dbReference>
<dbReference type="RefSeq" id="NP_001335153.1">
    <property type="nucleotide sequence ID" value="NM_001348224.1"/>
</dbReference>
<dbReference type="SMR" id="Q9H342"/>
<dbReference type="FunCoup" id="Q9H342">
    <property type="interactions" value="17"/>
</dbReference>
<dbReference type="GlyCosmos" id="Q9H342">
    <property type="glycosylation" value="1 site, No reported glycans"/>
</dbReference>
<dbReference type="GlyGen" id="Q9H342">
    <property type="glycosylation" value="1 site"/>
</dbReference>
<dbReference type="BioMuta" id="OR51J1"/>
<dbReference type="DMDM" id="190359996"/>
<dbReference type="PaxDb" id="9606-ENSP00000332473"/>
<dbReference type="DNASU" id="79470"/>
<dbReference type="UCSC" id="uc057yhp.1">
    <property type="organism name" value="human"/>
</dbReference>
<dbReference type="AGR" id="HGNC:14856"/>
<dbReference type="DisGeNET" id="79470"/>
<dbReference type="GeneCards" id="OR51J1"/>
<dbReference type="HGNC" id="HGNC:14856">
    <property type="gene designation" value="OR51J1"/>
</dbReference>
<dbReference type="neXtProt" id="NX_Q9H342"/>
<dbReference type="eggNOG" id="ENOG502QVH7">
    <property type="taxonomic scope" value="Eukaryota"/>
</dbReference>
<dbReference type="HOGENOM" id="CLU_012526_0_0_1"/>
<dbReference type="InParanoid" id="Q9H342"/>
<dbReference type="PAN-GO" id="Q9H342">
    <property type="GO annotations" value="2 GO annotations based on evolutionary models"/>
</dbReference>
<dbReference type="PhylomeDB" id="Q9H342"/>
<dbReference type="TreeFam" id="TF342735"/>
<dbReference type="PathwayCommons" id="Q9H342"/>
<dbReference type="Reactome" id="R-HSA-9752946">
    <property type="pathway name" value="Expression and translocation of olfactory receptors"/>
</dbReference>
<dbReference type="BioGRID-ORCS" id="79470">
    <property type="hits" value="2 hits in 129 CRISPR screens"/>
</dbReference>
<dbReference type="Pharos" id="Q9H342">
    <property type="development level" value="Tdark"/>
</dbReference>
<dbReference type="PRO" id="PR:Q9H342"/>
<dbReference type="Proteomes" id="UP000005640">
    <property type="component" value="Unplaced"/>
</dbReference>
<dbReference type="RNAct" id="Q9H342">
    <property type="molecule type" value="protein"/>
</dbReference>
<dbReference type="GO" id="GO:0016020">
    <property type="term" value="C:membrane"/>
    <property type="evidence" value="ECO:0000303"/>
    <property type="project" value="UniProtKB"/>
</dbReference>
<dbReference type="GO" id="GO:0005886">
    <property type="term" value="C:plasma membrane"/>
    <property type="evidence" value="ECO:0000318"/>
    <property type="project" value="GO_Central"/>
</dbReference>
<dbReference type="GO" id="GO:0004930">
    <property type="term" value="F:G protein-coupled receptor activity"/>
    <property type="evidence" value="ECO:0007669"/>
    <property type="project" value="UniProtKB-KW"/>
</dbReference>
<dbReference type="GO" id="GO:0004984">
    <property type="term" value="F:olfactory receptor activity"/>
    <property type="evidence" value="ECO:0000318"/>
    <property type="project" value="GO_Central"/>
</dbReference>
<dbReference type="GO" id="GO:0007608">
    <property type="term" value="P:sensory perception of smell"/>
    <property type="evidence" value="ECO:0000303"/>
    <property type="project" value="UniProtKB"/>
</dbReference>
<dbReference type="Gene3D" id="1.20.1070.10">
    <property type="entry name" value="Rhodopsin 7-helix transmembrane proteins"/>
    <property type="match status" value="2"/>
</dbReference>
<dbReference type="InterPro" id="IPR000276">
    <property type="entry name" value="GPCR_Rhodpsn"/>
</dbReference>
<dbReference type="InterPro" id="IPR017452">
    <property type="entry name" value="GPCR_Rhodpsn_7TM"/>
</dbReference>
<dbReference type="InterPro" id="IPR000725">
    <property type="entry name" value="Olfact_rcpt"/>
</dbReference>
<dbReference type="InterPro" id="IPR050402">
    <property type="entry name" value="OR51/52/56-like"/>
</dbReference>
<dbReference type="PANTHER" id="PTHR26450:SF81">
    <property type="entry name" value="OLFACTORY RECEPTOR 51J1"/>
    <property type="match status" value="1"/>
</dbReference>
<dbReference type="PANTHER" id="PTHR26450">
    <property type="entry name" value="OLFACTORY RECEPTOR 56B1-RELATED"/>
    <property type="match status" value="1"/>
</dbReference>
<dbReference type="Pfam" id="PF13853">
    <property type="entry name" value="7tm_4"/>
    <property type="match status" value="1"/>
</dbReference>
<dbReference type="PRINTS" id="PR00237">
    <property type="entry name" value="GPCRRHODOPSN"/>
</dbReference>
<dbReference type="SUPFAM" id="SSF81321">
    <property type="entry name" value="Family A G protein-coupled receptor-like"/>
    <property type="match status" value="2"/>
</dbReference>
<dbReference type="PROSITE" id="PS50262">
    <property type="entry name" value="G_PROTEIN_RECEP_F1_2"/>
    <property type="match status" value="1"/>
</dbReference>
<reference key="1">
    <citation type="journal article" date="2000" name="Proc. Natl. Acad. Sci. U.S.A.">
        <title>Comparative structural and functional analysis of the olfactory receptor genes flanking the human and mouse beta-globin gene clusters.</title>
        <authorList>
            <person name="Bulger M."/>
            <person name="Bender M.A."/>
            <person name="van Doorninck J.H."/>
            <person name="Wertman B."/>
            <person name="Farrell C.M."/>
            <person name="Felsenfeld G."/>
            <person name="Groudine M."/>
            <person name="Hardison R."/>
        </authorList>
    </citation>
    <scope>NUCLEOTIDE SEQUENCE [GENOMIC DNA]</scope>
</reference>
<reference key="2">
    <citation type="journal article" date="2006" name="Nature">
        <title>Human chromosome 11 DNA sequence and analysis including novel gene identification.</title>
        <authorList>
            <person name="Taylor T.D."/>
            <person name="Noguchi H."/>
            <person name="Totoki Y."/>
            <person name="Toyoda A."/>
            <person name="Kuroki Y."/>
            <person name="Dewar K."/>
            <person name="Lloyd C."/>
            <person name="Itoh T."/>
            <person name="Takeda T."/>
            <person name="Kim D.-W."/>
            <person name="She X."/>
            <person name="Barlow K.F."/>
            <person name="Bloom T."/>
            <person name="Bruford E."/>
            <person name="Chang J.L."/>
            <person name="Cuomo C.A."/>
            <person name="Eichler E."/>
            <person name="FitzGerald M.G."/>
            <person name="Jaffe D.B."/>
            <person name="LaButti K."/>
            <person name="Nicol R."/>
            <person name="Park H.-S."/>
            <person name="Seaman C."/>
            <person name="Sougnez C."/>
            <person name="Yang X."/>
            <person name="Zimmer A.R."/>
            <person name="Zody M.C."/>
            <person name="Birren B.W."/>
            <person name="Nusbaum C."/>
            <person name="Fujiyama A."/>
            <person name="Hattori M."/>
            <person name="Rogers J."/>
            <person name="Lander E.S."/>
            <person name="Sakaki Y."/>
        </authorList>
    </citation>
    <scope>NUCLEOTIDE SEQUENCE [LARGE SCALE GENOMIC DNA]</scope>
</reference>
<reference key="3">
    <citation type="journal article" date="2007" name="PLoS Biol.">
        <title>Genetic elucidation of human hyperosmia to isovaleric acid.</title>
        <authorList>
            <person name="Menashe I."/>
            <person name="Abaffy T."/>
            <person name="Hasin Y."/>
            <person name="Goshen S."/>
            <person name="Yahalom V."/>
            <person name="Luetje C.W."/>
            <person name="Lancet D."/>
        </authorList>
    </citation>
    <scope>POLYMORPHISM</scope>
    <scope>VARIANT TYR-100</scope>
</reference>
<feature type="chain" id="PRO_0000341578" description="Olfactory receptor 51J1">
    <location>
        <begin position="1"/>
        <end position="316"/>
    </location>
</feature>
<feature type="topological domain" description="Extracellular" evidence="1">
    <location>
        <begin position="1"/>
        <end position="31"/>
    </location>
</feature>
<feature type="transmembrane region" description="Helical; Name=1" evidence="1">
    <location>
        <begin position="32"/>
        <end position="52"/>
    </location>
</feature>
<feature type="topological domain" description="Cytoplasmic" evidence="1">
    <location>
        <begin position="53"/>
        <end position="63"/>
    </location>
</feature>
<feature type="transmembrane region" description="Helical; Name=2" evidence="1">
    <location>
        <begin position="64"/>
        <end position="84"/>
    </location>
</feature>
<feature type="topological domain" description="Extracellular" evidence="1">
    <location>
        <begin position="85"/>
        <end position="104"/>
    </location>
</feature>
<feature type="transmembrane region" description="Helical; Name=3" evidence="1">
    <location>
        <begin position="105"/>
        <end position="125"/>
    </location>
</feature>
<feature type="topological domain" description="Cytoplasmic" evidence="1">
    <location>
        <begin position="126"/>
        <end position="161"/>
    </location>
</feature>
<feature type="transmembrane region" description="Helical; Name=4" evidence="1">
    <location>
        <begin position="162"/>
        <end position="182"/>
    </location>
</feature>
<feature type="topological domain" description="Extracellular" evidence="1">
    <location>
        <begin position="183"/>
        <end position="191"/>
    </location>
</feature>
<feature type="transmembrane region" description="Helical; Name=5" evidence="1">
    <location>
        <begin position="192"/>
        <end position="212"/>
    </location>
</feature>
<feature type="topological domain" description="Cytoplasmic" evidence="1">
    <location>
        <begin position="213"/>
        <end position="242"/>
    </location>
</feature>
<feature type="transmembrane region" description="Helical; Name=6" evidence="1">
    <location>
        <begin position="243"/>
        <end position="263"/>
    </location>
</feature>
<feature type="topological domain" description="Extracellular" evidence="1">
    <location>
        <begin position="264"/>
        <end position="275"/>
    </location>
</feature>
<feature type="transmembrane region" description="Helical; Name=7" evidence="1">
    <location>
        <begin position="276"/>
        <end position="296"/>
    </location>
</feature>
<feature type="topological domain" description="Cytoplasmic" evidence="1">
    <location>
        <begin position="297"/>
        <end position="316"/>
    </location>
</feature>
<feature type="glycosylation site" description="N-linked (GlcNAc...) asparagine" evidence="1">
    <location>
        <position position="5"/>
    </location>
</feature>
<feature type="disulfide bond" evidence="2">
    <location>
        <begin position="100"/>
        <end position="191"/>
    </location>
</feature>
<feature type="sequence variant" id="VAR_044085" description="In dbSNP:rs1909261." evidence="3">
    <original>C</original>
    <variation>Y</variation>
    <location>
        <position position="100"/>
    </location>
</feature>
<feature type="sequence conflict" description="In Ref. 1; AAG41680." evidence="4" ref="1">
    <original>R</original>
    <variation>H</variation>
    <location>
        <position position="75"/>
    </location>
</feature>
<protein>
    <recommendedName>
        <fullName>Olfactory receptor 51J1</fullName>
    </recommendedName>
    <alternativeName>
        <fullName>Odorant receptor HOR5'beta8</fullName>
    </alternativeName>
    <alternativeName>
        <fullName>Olfactory receptor 51J2</fullName>
    </alternativeName>
</protein>
<organism>
    <name type="scientific">Homo sapiens</name>
    <name type="common">Human</name>
    <dbReference type="NCBI Taxonomy" id="9606"/>
    <lineage>
        <taxon>Eukaryota</taxon>
        <taxon>Metazoa</taxon>
        <taxon>Chordata</taxon>
        <taxon>Craniata</taxon>
        <taxon>Vertebrata</taxon>
        <taxon>Euteleostomi</taxon>
        <taxon>Mammalia</taxon>
        <taxon>Eutheria</taxon>
        <taxon>Euarchontoglires</taxon>
        <taxon>Primates</taxon>
        <taxon>Haplorrhini</taxon>
        <taxon>Catarrhini</taxon>
        <taxon>Hominidae</taxon>
        <taxon>Homo</taxon>
    </lineage>
</organism>
<gene>
    <name type="primary">OR51J1</name>
    <name type="synonym">OR51J1P</name>
    <name type="synonym">OR51J2</name>
</gene>
<name>O51J1_HUMAN</name>
<keyword id="KW-1003">Cell membrane</keyword>
<keyword id="KW-1015">Disulfide bond</keyword>
<keyword id="KW-0297">G-protein coupled receptor</keyword>
<keyword id="KW-0325">Glycoprotein</keyword>
<keyword id="KW-0472">Membrane</keyword>
<keyword id="KW-0552">Olfaction</keyword>
<keyword id="KW-0675">Receptor</keyword>
<keyword id="KW-1185">Reference proteome</keyword>
<keyword id="KW-0716">Sensory transduction</keyword>
<keyword id="KW-0807">Transducer</keyword>
<keyword id="KW-0812">Transmembrane</keyword>
<keyword id="KW-1133">Transmembrane helix</keyword>
<proteinExistence type="inferred from homology"/>